<sequence length="877" mass="98900">MNEKYAALKSNVSMLGHLLGNTIQEAHGDEILEKVETIRKLSKSARAGNQADRNNLIEEIKSLPDEQLTPVARAFNQFLNLTNIAEQYHTISRHCDAHVCEPDAINTLFAKLGQNGINKLDTAQAIRELNIELVLTAHPTEITRRTMINKLVKINECLSKLELSDLSYKERHKTEKRLEQLIAQSWHSDVIRKQRPTPLDEAKWGFAVVENSLWEAVPDFLRELDEKLKDYLDQGLPIDARPVHFSSWMGGDRDGNPFVTHTVTREVLLLSRWKAADLYLKDINELISELSMTKCNDTVRQLAGEDEHEPYRAILKQLRTLLSDTKEILDAKINGQKLAVKAPLQSVEQLWDPLFACYQSLRECGMSMIAEGSLLDTLRRVKAFGVHLVRLDIRQESTRHADVLSELTRYLGIGDYNHWSEQDKIAFLTNELASKRPLLPRDWQPSEQVKEVLDTCKIIAAQSREAFGAYVISMAKTASDVLAVHLLLQESGCPYRMDVCPLFETLDDLNNAEAVIKQLMSIDLYRGFIQNHQMVMIGYSDSAKDAGVMAAGWAQYHAMEALVNVAEQEGIELTLFHGRGGTIGRGGAPAHAALLSQPPKSLKGGLRVTEQGEMIRFKLGLPDVAVNSFNMYASAILEANLLPPPEPKQEWRDLMEVLSQVSCEAYRSVVRGEPDFVPYFRQATPELELGKLPLGSRPAKRNPNGGVESLRAIPWIFSWSQNRLLLPAWLGAGEAIQYSIDKGHQALLEEMCREWPFFSTRLGMLEMVYLKCNSEISRYYDERLADKSLLPLGDRLRDQLQSDIKAVLNVENNENLMQSDPWGQESIRLRNIYIEPLNMLQAELLYRTRQAGVVSEALEEALMVTIAGIAAGMRNTG</sequence>
<accession>Q8DCN2</accession>
<feature type="chain" id="PRO_0000166649" description="Phosphoenolpyruvate carboxylase">
    <location>
        <begin position="1"/>
        <end position="877"/>
    </location>
</feature>
<feature type="active site" evidence="1">
    <location>
        <position position="138"/>
    </location>
</feature>
<feature type="active site" evidence="1">
    <location>
        <position position="544"/>
    </location>
</feature>
<reference key="1">
    <citation type="submission" date="2002-12" db="EMBL/GenBank/DDBJ databases">
        <title>Complete genome sequence of Vibrio vulnificus CMCP6.</title>
        <authorList>
            <person name="Rhee J.H."/>
            <person name="Kim S.Y."/>
            <person name="Chung S.S."/>
            <person name="Kim J.J."/>
            <person name="Moon Y.H."/>
            <person name="Jeong H."/>
            <person name="Choy H.E."/>
        </authorList>
    </citation>
    <scope>NUCLEOTIDE SEQUENCE [LARGE SCALE GENOMIC DNA]</scope>
    <source>
        <strain>CMCP6</strain>
    </source>
</reference>
<organism>
    <name type="scientific">Vibrio vulnificus (strain CMCP6)</name>
    <dbReference type="NCBI Taxonomy" id="216895"/>
    <lineage>
        <taxon>Bacteria</taxon>
        <taxon>Pseudomonadati</taxon>
        <taxon>Pseudomonadota</taxon>
        <taxon>Gammaproteobacteria</taxon>
        <taxon>Vibrionales</taxon>
        <taxon>Vibrionaceae</taxon>
        <taxon>Vibrio</taxon>
    </lineage>
</organism>
<dbReference type="EC" id="4.1.1.31" evidence="1"/>
<dbReference type="EMBL" id="AE016795">
    <property type="protein sequence ID" value="AAO09818.2"/>
    <property type="status" value="ALT_INIT"/>
    <property type="molecule type" value="Genomic_DNA"/>
</dbReference>
<dbReference type="RefSeq" id="WP_043921084.1">
    <property type="nucleotide sequence ID" value="NC_004459.3"/>
</dbReference>
<dbReference type="SMR" id="Q8DCN2"/>
<dbReference type="KEGG" id="vvu:VV1_1369"/>
<dbReference type="HOGENOM" id="CLU_006557_2_0_6"/>
<dbReference type="Proteomes" id="UP000002275">
    <property type="component" value="Chromosome 1"/>
</dbReference>
<dbReference type="GO" id="GO:0005829">
    <property type="term" value="C:cytosol"/>
    <property type="evidence" value="ECO:0007669"/>
    <property type="project" value="TreeGrafter"/>
</dbReference>
<dbReference type="GO" id="GO:0000287">
    <property type="term" value="F:magnesium ion binding"/>
    <property type="evidence" value="ECO:0007669"/>
    <property type="project" value="UniProtKB-UniRule"/>
</dbReference>
<dbReference type="GO" id="GO:0008964">
    <property type="term" value="F:phosphoenolpyruvate carboxylase activity"/>
    <property type="evidence" value="ECO:0007669"/>
    <property type="project" value="UniProtKB-UniRule"/>
</dbReference>
<dbReference type="GO" id="GO:0015977">
    <property type="term" value="P:carbon fixation"/>
    <property type="evidence" value="ECO:0007669"/>
    <property type="project" value="UniProtKB-UniRule"/>
</dbReference>
<dbReference type="GO" id="GO:0006107">
    <property type="term" value="P:oxaloacetate metabolic process"/>
    <property type="evidence" value="ECO:0007669"/>
    <property type="project" value="UniProtKB-UniRule"/>
</dbReference>
<dbReference type="GO" id="GO:0006099">
    <property type="term" value="P:tricarboxylic acid cycle"/>
    <property type="evidence" value="ECO:0007669"/>
    <property type="project" value="InterPro"/>
</dbReference>
<dbReference type="FunFam" id="1.20.1440.90:FF:000002">
    <property type="entry name" value="Phosphoenolpyruvate carboxylase"/>
    <property type="match status" value="1"/>
</dbReference>
<dbReference type="Gene3D" id="1.20.1440.90">
    <property type="entry name" value="Phosphoenolpyruvate/pyruvate domain"/>
    <property type="match status" value="1"/>
</dbReference>
<dbReference type="HAMAP" id="MF_00595">
    <property type="entry name" value="PEPcase_type1"/>
    <property type="match status" value="1"/>
</dbReference>
<dbReference type="InterPro" id="IPR021135">
    <property type="entry name" value="PEP_COase"/>
</dbReference>
<dbReference type="InterPro" id="IPR022805">
    <property type="entry name" value="PEP_COase_bac/pln-type"/>
</dbReference>
<dbReference type="InterPro" id="IPR018129">
    <property type="entry name" value="PEP_COase_Lys_AS"/>
</dbReference>
<dbReference type="InterPro" id="IPR033129">
    <property type="entry name" value="PEPCASE_His_AS"/>
</dbReference>
<dbReference type="InterPro" id="IPR015813">
    <property type="entry name" value="Pyrv/PenolPyrv_kinase-like_dom"/>
</dbReference>
<dbReference type="NCBIfam" id="NF000584">
    <property type="entry name" value="PRK00009.1"/>
    <property type="match status" value="1"/>
</dbReference>
<dbReference type="PANTHER" id="PTHR30523">
    <property type="entry name" value="PHOSPHOENOLPYRUVATE CARBOXYLASE"/>
    <property type="match status" value="1"/>
</dbReference>
<dbReference type="PANTHER" id="PTHR30523:SF6">
    <property type="entry name" value="PHOSPHOENOLPYRUVATE CARBOXYLASE"/>
    <property type="match status" value="1"/>
</dbReference>
<dbReference type="Pfam" id="PF00311">
    <property type="entry name" value="PEPcase"/>
    <property type="match status" value="1"/>
</dbReference>
<dbReference type="PRINTS" id="PR00150">
    <property type="entry name" value="PEPCARBXLASE"/>
</dbReference>
<dbReference type="SUPFAM" id="SSF51621">
    <property type="entry name" value="Phosphoenolpyruvate/pyruvate domain"/>
    <property type="match status" value="1"/>
</dbReference>
<dbReference type="PROSITE" id="PS00781">
    <property type="entry name" value="PEPCASE_1"/>
    <property type="match status" value="1"/>
</dbReference>
<dbReference type="PROSITE" id="PS00393">
    <property type="entry name" value="PEPCASE_2"/>
    <property type="match status" value="1"/>
</dbReference>
<name>CAPP_VIBVU</name>
<protein>
    <recommendedName>
        <fullName evidence="1">Phosphoenolpyruvate carboxylase</fullName>
        <shortName evidence="1">PEPC</shortName>
        <shortName evidence="1">PEPCase</shortName>
        <ecNumber evidence="1">4.1.1.31</ecNumber>
    </recommendedName>
</protein>
<gene>
    <name evidence="1" type="primary">ppc</name>
    <name type="ordered locus">VV1_1369</name>
</gene>
<keyword id="KW-0120">Carbon dioxide fixation</keyword>
<keyword id="KW-0456">Lyase</keyword>
<keyword id="KW-0460">Magnesium</keyword>
<evidence type="ECO:0000255" key="1">
    <source>
        <dbReference type="HAMAP-Rule" id="MF_00595"/>
    </source>
</evidence>
<evidence type="ECO:0000305" key="2"/>
<proteinExistence type="inferred from homology"/>
<comment type="function">
    <text evidence="1">Forms oxaloacetate, a four-carbon dicarboxylic acid source for the tricarboxylic acid cycle.</text>
</comment>
<comment type="catalytic activity">
    <reaction evidence="1">
        <text>oxaloacetate + phosphate = phosphoenolpyruvate + hydrogencarbonate</text>
        <dbReference type="Rhea" id="RHEA:28370"/>
        <dbReference type="ChEBI" id="CHEBI:16452"/>
        <dbReference type="ChEBI" id="CHEBI:17544"/>
        <dbReference type="ChEBI" id="CHEBI:43474"/>
        <dbReference type="ChEBI" id="CHEBI:58702"/>
        <dbReference type="EC" id="4.1.1.31"/>
    </reaction>
</comment>
<comment type="cofactor">
    <cofactor evidence="1">
        <name>Mg(2+)</name>
        <dbReference type="ChEBI" id="CHEBI:18420"/>
    </cofactor>
</comment>
<comment type="similarity">
    <text evidence="1">Belongs to the PEPCase type 1 family.</text>
</comment>
<comment type="sequence caution" evidence="2">
    <conflict type="erroneous initiation">
        <sequence resource="EMBL-CDS" id="AAO09818"/>
    </conflict>
    <text>Extended N-terminus.</text>
</comment>